<protein>
    <recommendedName>
        <fullName evidence="1">Small ribosomal subunit protein uS11</fullName>
    </recommendedName>
    <alternativeName>
        <fullName evidence="2">30S ribosomal protein S11</fullName>
    </alternativeName>
</protein>
<sequence>MAKEAARVRRRERKNIASGVAHVNSSFNNTTITITDAQGNTIAWSSAGTMGFKGSRKSTPYAAQVAAEDVSKKAQEHGMRTLEVEVAGPGSGRESALRALQAAGFTVTSIRDVTTIPHNGCRPRKRRRV</sequence>
<evidence type="ECO:0000255" key="1">
    <source>
        <dbReference type="HAMAP-Rule" id="MF_01310"/>
    </source>
</evidence>
<evidence type="ECO:0000305" key="2"/>
<comment type="function">
    <text evidence="1">Located on the platform of the 30S subunit, it bridges several disparate RNA helices of the 16S rRNA. Forms part of the Shine-Dalgarno cleft in the 70S ribosome.</text>
</comment>
<comment type="subunit">
    <text evidence="1">Part of the 30S ribosomal subunit. Interacts with proteins S7 and S18. Binds to IF-3.</text>
</comment>
<comment type="similarity">
    <text evidence="1">Belongs to the universal ribosomal protein uS11 family.</text>
</comment>
<accession>A4YSL5</accession>
<proteinExistence type="inferred from homology"/>
<name>RS11_BRASO</name>
<reference key="1">
    <citation type="journal article" date="2007" name="Science">
        <title>Legumes symbioses: absence of nod genes in photosynthetic bradyrhizobia.</title>
        <authorList>
            <person name="Giraud E."/>
            <person name="Moulin L."/>
            <person name="Vallenet D."/>
            <person name="Barbe V."/>
            <person name="Cytryn E."/>
            <person name="Avarre J.-C."/>
            <person name="Jaubert M."/>
            <person name="Simon D."/>
            <person name="Cartieaux F."/>
            <person name="Prin Y."/>
            <person name="Bena G."/>
            <person name="Hannibal L."/>
            <person name="Fardoux J."/>
            <person name="Kojadinovic M."/>
            <person name="Vuillet L."/>
            <person name="Lajus A."/>
            <person name="Cruveiller S."/>
            <person name="Rouy Z."/>
            <person name="Mangenot S."/>
            <person name="Segurens B."/>
            <person name="Dossat C."/>
            <person name="Franck W.L."/>
            <person name="Chang W.-S."/>
            <person name="Saunders E."/>
            <person name="Bruce D."/>
            <person name="Richardson P."/>
            <person name="Normand P."/>
            <person name="Dreyfus B."/>
            <person name="Pignol D."/>
            <person name="Stacey G."/>
            <person name="Emerich D."/>
            <person name="Vermeglio A."/>
            <person name="Medigue C."/>
            <person name="Sadowsky M."/>
        </authorList>
    </citation>
    <scope>NUCLEOTIDE SEQUENCE [LARGE SCALE GENOMIC DNA]</scope>
    <source>
        <strain>ORS 278</strain>
    </source>
</reference>
<organism>
    <name type="scientific">Bradyrhizobium sp. (strain ORS 278)</name>
    <dbReference type="NCBI Taxonomy" id="114615"/>
    <lineage>
        <taxon>Bacteria</taxon>
        <taxon>Pseudomonadati</taxon>
        <taxon>Pseudomonadota</taxon>
        <taxon>Alphaproteobacteria</taxon>
        <taxon>Hyphomicrobiales</taxon>
        <taxon>Nitrobacteraceae</taxon>
        <taxon>Bradyrhizobium</taxon>
    </lineage>
</organism>
<keyword id="KW-1185">Reference proteome</keyword>
<keyword id="KW-0687">Ribonucleoprotein</keyword>
<keyword id="KW-0689">Ribosomal protein</keyword>
<keyword id="KW-0694">RNA-binding</keyword>
<keyword id="KW-0699">rRNA-binding</keyword>
<gene>
    <name evidence="1" type="primary">rpsK</name>
    <name type="ordered locus">BRADO3089</name>
</gene>
<feature type="chain" id="PRO_0000294724" description="Small ribosomal subunit protein uS11">
    <location>
        <begin position="1"/>
        <end position="129"/>
    </location>
</feature>
<dbReference type="EMBL" id="CU234118">
    <property type="protein sequence ID" value="CAL76891.1"/>
    <property type="molecule type" value="Genomic_DNA"/>
</dbReference>
<dbReference type="RefSeq" id="WP_006611861.1">
    <property type="nucleotide sequence ID" value="NC_009445.1"/>
</dbReference>
<dbReference type="SMR" id="A4YSL5"/>
<dbReference type="STRING" id="114615.BRADO3089"/>
<dbReference type="KEGG" id="bra:BRADO3089"/>
<dbReference type="eggNOG" id="COG0100">
    <property type="taxonomic scope" value="Bacteria"/>
</dbReference>
<dbReference type="HOGENOM" id="CLU_072439_5_0_5"/>
<dbReference type="OrthoDB" id="9806415at2"/>
<dbReference type="Proteomes" id="UP000001994">
    <property type="component" value="Chromosome"/>
</dbReference>
<dbReference type="GO" id="GO:1990904">
    <property type="term" value="C:ribonucleoprotein complex"/>
    <property type="evidence" value="ECO:0007669"/>
    <property type="project" value="UniProtKB-KW"/>
</dbReference>
<dbReference type="GO" id="GO:0005840">
    <property type="term" value="C:ribosome"/>
    <property type="evidence" value="ECO:0007669"/>
    <property type="project" value="UniProtKB-KW"/>
</dbReference>
<dbReference type="GO" id="GO:0019843">
    <property type="term" value="F:rRNA binding"/>
    <property type="evidence" value="ECO:0007669"/>
    <property type="project" value="UniProtKB-UniRule"/>
</dbReference>
<dbReference type="GO" id="GO:0003735">
    <property type="term" value="F:structural constituent of ribosome"/>
    <property type="evidence" value="ECO:0007669"/>
    <property type="project" value="InterPro"/>
</dbReference>
<dbReference type="GO" id="GO:0006412">
    <property type="term" value="P:translation"/>
    <property type="evidence" value="ECO:0007669"/>
    <property type="project" value="UniProtKB-UniRule"/>
</dbReference>
<dbReference type="FunFam" id="3.30.420.80:FF:000001">
    <property type="entry name" value="30S ribosomal protein S11"/>
    <property type="match status" value="1"/>
</dbReference>
<dbReference type="Gene3D" id="3.30.420.80">
    <property type="entry name" value="Ribosomal protein S11"/>
    <property type="match status" value="1"/>
</dbReference>
<dbReference type="HAMAP" id="MF_01310">
    <property type="entry name" value="Ribosomal_uS11"/>
    <property type="match status" value="1"/>
</dbReference>
<dbReference type="InterPro" id="IPR001971">
    <property type="entry name" value="Ribosomal_uS11"/>
</dbReference>
<dbReference type="InterPro" id="IPR019981">
    <property type="entry name" value="Ribosomal_uS11_bac-type"/>
</dbReference>
<dbReference type="InterPro" id="IPR036967">
    <property type="entry name" value="Ribosomal_uS11_sf"/>
</dbReference>
<dbReference type="NCBIfam" id="NF003698">
    <property type="entry name" value="PRK05309.1"/>
    <property type="match status" value="1"/>
</dbReference>
<dbReference type="NCBIfam" id="TIGR03632">
    <property type="entry name" value="uS11_bact"/>
    <property type="match status" value="1"/>
</dbReference>
<dbReference type="PANTHER" id="PTHR11759">
    <property type="entry name" value="40S RIBOSOMAL PROTEIN S14/30S RIBOSOMAL PROTEIN S11"/>
    <property type="match status" value="1"/>
</dbReference>
<dbReference type="Pfam" id="PF00411">
    <property type="entry name" value="Ribosomal_S11"/>
    <property type="match status" value="1"/>
</dbReference>
<dbReference type="PIRSF" id="PIRSF002131">
    <property type="entry name" value="Ribosomal_S11"/>
    <property type="match status" value="1"/>
</dbReference>
<dbReference type="SUPFAM" id="SSF53137">
    <property type="entry name" value="Translational machinery components"/>
    <property type="match status" value="1"/>
</dbReference>